<dbReference type="EMBL" id="AC002560">
    <property type="protein sequence ID" value="AAF86537.1"/>
    <property type="status" value="ALT_INIT"/>
    <property type="molecule type" value="Genomic_DNA"/>
</dbReference>
<dbReference type="EMBL" id="CP002684">
    <property type="protein sequence ID" value="AEE27575.1"/>
    <property type="molecule type" value="Genomic_DNA"/>
</dbReference>
<dbReference type="EMBL" id="CP002684">
    <property type="protein sequence ID" value="AEE27576.1"/>
    <property type="molecule type" value="Genomic_DNA"/>
</dbReference>
<dbReference type="EMBL" id="CP002684">
    <property type="protein sequence ID" value="ANM60841.1"/>
    <property type="molecule type" value="Genomic_DNA"/>
</dbReference>
<dbReference type="EMBL" id="CP002684">
    <property type="protein sequence ID" value="ANM60842.1"/>
    <property type="molecule type" value="Genomic_DNA"/>
</dbReference>
<dbReference type="EMBL" id="BT015334">
    <property type="protein sequence ID" value="AAU05457.1"/>
    <property type="molecule type" value="mRNA"/>
</dbReference>
<dbReference type="EMBL" id="BT015710">
    <property type="protein sequence ID" value="AAU45208.1"/>
    <property type="molecule type" value="mRNA"/>
</dbReference>
<dbReference type="EMBL" id="AK176021">
    <property type="protein sequence ID" value="BAD43784.1"/>
    <property type="molecule type" value="mRNA"/>
</dbReference>
<dbReference type="PIR" id="T00911">
    <property type="entry name" value="T00911"/>
</dbReference>
<dbReference type="RefSeq" id="NP_001030943.1">
    <property type="nucleotide sequence ID" value="NM_001035866.2"/>
</dbReference>
<dbReference type="RefSeq" id="NP_001318913.1">
    <property type="nucleotide sequence ID" value="NM_001331414.1"/>
</dbReference>
<dbReference type="RefSeq" id="NP_001323097.1">
    <property type="nucleotide sequence ID" value="NM_001331415.1"/>
</dbReference>
<dbReference type="RefSeq" id="NP_171846.2">
    <property type="nucleotide sequence ID" value="NM_100229.4"/>
</dbReference>
<dbReference type="SMR" id="Q66GR8"/>
<dbReference type="FunCoup" id="Q66GR8">
    <property type="interactions" value="163"/>
</dbReference>
<dbReference type="STRING" id="3702.Q66GR8"/>
<dbReference type="PaxDb" id="3702-AT1G03470.1"/>
<dbReference type="ProteomicsDB" id="251189"/>
<dbReference type="EnsemblPlants" id="AT1G03470.1">
    <property type="protein sequence ID" value="AT1G03470.1"/>
    <property type="gene ID" value="AT1G03470"/>
</dbReference>
<dbReference type="EnsemblPlants" id="AT1G03470.2">
    <property type="protein sequence ID" value="AT1G03470.2"/>
    <property type="gene ID" value="AT1G03470"/>
</dbReference>
<dbReference type="EnsemblPlants" id="AT1G03470.3">
    <property type="protein sequence ID" value="AT1G03470.3"/>
    <property type="gene ID" value="AT1G03470"/>
</dbReference>
<dbReference type="EnsemblPlants" id="AT1G03470.4">
    <property type="protein sequence ID" value="AT1G03470.4"/>
    <property type="gene ID" value="AT1G03470"/>
</dbReference>
<dbReference type="GeneID" id="839494"/>
<dbReference type="Gramene" id="AT1G03470.1">
    <property type="protein sequence ID" value="AT1G03470.1"/>
    <property type="gene ID" value="AT1G03470"/>
</dbReference>
<dbReference type="Gramene" id="AT1G03470.2">
    <property type="protein sequence ID" value="AT1G03470.2"/>
    <property type="gene ID" value="AT1G03470"/>
</dbReference>
<dbReference type="Gramene" id="AT1G03470.3">
    <property type="protein sequence ID" value="AT1G03470.3"/>
    <property type="gene ID" value="AT1G03470"/>
</dbReference>
<dbReference type="Gramene" id="AT1G03470.4">
    <property type="protein sequence ID" value="AT1G03470.4"/>
    <property type="gene ID" value="AT1G03470"/>
</dbReference>
<dbReference type="KEGG" id="ath:AT1G03470"/>
<dbReference type="Araport" id="AT1G03470"/>
<dbReference type="TAIR" id="AT1G03470">
    <property type="gene designation" value="NET3A"/>
</dbReference>
<dbReference type="eggNOG" id="ENOG502R3Z2">
    <property type="taxonomic scope" value="Eukaryota"/>
</dbReference>
<dbReference type="HOGENOM" id="CLU_072690_1_0_1"/>
<dbReference type="InParanoid" id="Q66GR8"/>
<dbReference type="OMA" id="QRKQQMW"/>
<dbReference type="PhylomeDB" id="Q66GR8"/>
<dbReference type="PRO" id="PR:Q66GR8"/>
<dbReference type="Proteomes" id="UP000006548">
    <property type="component" value="Chromosome 1"/>
</dbReference>
<dbReference type="ExpressionAtlas" id="Q66GR8">
    <property type="expression patterns" value="baseline and differential"/>
</dbReference>
<dbReference type="GO" id="GO:0005856">
    <property type="term" value="C:cytoskeleton"/>
    <property type="evidence" value="ECO:0007669"/>
    <property type="project" value="UniProtKB-SubCell"/>
</dbReference>
<dbReference type="GO" id="GO:0031965">
    <property type="term" value="C:nuclear membrane"/>
    <property type="evidence" value="ECO:0000314"/>
    <property type="project" value="TAIR"/>
</dbReference>
<dbReference type="GO" id="GO:0005774">
    <property type="term" value="C:vacuolar membrane"/>
    <property type="evidence" value="ECO:0000314"/>
    <property type="project" value="TAIR"/>
</dbReference>
<dbReference type="GO" id="GO:0003779">
    <property type="term" value="F:actin binding"/>
    <property type="evidence" value="ECO:0007669"/>
    <property type="project" value="InterPro"/>
</dbReference>
<dbReference type="InterPro" id="IPR011684">
    <property type="entry name" value="NAB"/>
</dbReference>
<dbReference type="InterPro" id="IPR051861">
    <property type="entry name" value="NET_actin-binding_domain"/>
</dbReference>
<dbReference type="PANTHER" id="PTHR32258:SF28">
    <property type="entry name" value="PROTEIN NETWORKED 3A-RELATED"/>
    <property type="match status" value="1"/>
</dbReference>
<dbReference type="PANTHER" id="PTHR32258">
    <property type="entry name" value="PROTEIN NETWORKED 4A"/>
    <property type="match status" value="1"/>
</dbReference>
<dbReference type="Pfam" id="PF07765">
    <property type="entry name" value="KIP1"/>
    <property type="match status" value="1"/>
</dbReference>
<dbReference type="PROSITE" id="PS51774">
    <property type="entry name" value="NAB"/>
    <property type="match status" value="1"/>
</dbReference>
<evidence type="ECO:0000255" key="1"/>
<evidence type="ECO:0000255" key="2">
    <source>
        <dbReference type="PROSITE-ProRule" id="PRU01110"/>
    </source>
</evidence>
<evidence type="ECO:0000256" key="3">
    <source>
        <dbReference type="SAM" id="MobiDB-lite"/>
    </source>
</evidence>
<evidence type="ECO:0000269" key="4">
    <source>
    </source>
</evidence>
<evidence type="ECO:0000303" key="5">
    <source>
    </source>
</evidence>
<evidence type="ECO:0000305" key="6"/>
<evidence type="ECO:0000305" key="7">
    <source>
    </source>
</evidence>
<evidence type="ECO:0000312" key="8">
    <source>
        <dbReference type="Araport" id="AT1G03470"/>
    </source>
</evidence>
<evidence type="ECO:0000312" key="9">
    <source>
        <dbReference type="EMBL" id="AAF86537.1"/>
    </source>
</evidence>
<evidence type="ECO:0000312" key="10">
    <source>
        <dbReference type="EMBL" id="AAU05457.1"/>
    </source>
</evidence>
<feature type="chain" id="PRO_0000431857" description="Protein NETWORKED 3A">
    <location>
        <begin position="1"/>
        <end position="269"/>
    </location>
</feature>
<feature type="domain" description="NAB" evidence="2">
    <location>
        <begin position="6"/>
        <end position="87"/>
    </location>
</feature>
<feature type="region of interest" description="Disordered" evidence="3">
    <location>
        <begin position="87"/>
        <end position="113"/>
    </location>
</feature>
<feature type="coiled-coil region" evidence="1">
    <location>
        <begin position="155"/>
        <end position="214"/>
    </location>
</feature>
<feature type="compositionally biased region" description="Basic and acidic residues" evidence="3">
    <location>
        <begin position="91"/>
        <end position="103"/>
    </location>
</feature>
<organism evidence="10">
    <name type="scientific">Arabidopsis thaliana</name>
    <name type="common">Mouse-ear cress</name>
    <dbReference type="NCBI Taxonomy" id="3702"/>
    <lineage>
        <taxon>Eukaryota</taxon>
        <taxon>Viridiplantae</taxon>
        <taxon>Streptophyta</taxon>
        <taxon>Embryophyta</taxon>
        <taxon>Tracheophyta</taxon>
        <taxon>Spermatophyta</taxon>
        <taxon>Magnoliopsida</taxon>
        <taxon>eudicotyledons</taxon>
        <taxon>Gunneridae</taxon>
        <taxon>Pentapetalae</taxon>
        <taxon>rosids</taxon>
        <taxon>malvids</taxon>
        <taxon>Brassicales</taxon>
        <taxon>Brassicaceae</taxon>
        <taxon>Camelineae</taxon>
        <taxon>Arabidopsis</taxon>
    </lineage>
</organism>
<proteinExistence type="evidence at transcript level"/>
<gene>
    <name evidence="5" type="primary">NET3A</name>
    <name evidence="8" type="ordered locus">At1g03470</name>
    <name evidence="9" type="ORF">F21B7.9</name>
</gene>
<comment type="function">
    <text evidence="7">Plant-specific actin binding protein. May be part of a membrane-cytoskeletal adapter complex.</text>
</comment>
<comment type="subcellular location">
    <subcellularLocation>
        <location evidence="4">Cytoplasm</location>
        <location evidence="4">Cytoskeleton</location>
    </subcellularLocation>
    <subcellularLocation>
        <location evidence="4">Nucleus membrane</location>
    </subcellularLocation>
</comment>
<comment type="domain">
    <text evidence="4">The NAB domain, also called NAB (NET actin-binding) domain, is sufficient for F-actin binding.</text>
</comment>
<comment type="similarity">
    <text evidence="6">Belongs to the NET family.</text>
</comment>
<comment type="sequence caution" evidence="6">
    <conflict type="erroneous initiation">
        <sequence resource="EMBL-CDS" id="AAF86537"/>
    </conflict>
    <text>Truncated N-terminus.</text>
</comment>
<sequence>MVMDSSKWWWIGNHNTTNFSPWLHSTLSELDEKTKEMLRVIDEDADSFAARAEMYYKKRPELIAMVEEFYRSHRSLAERYDLLRPSSVHKHGSDSESHEKSSTCDESSWSEACETHEEYAESEIDNGESKWVDESEIDGIVEEIEPSEVVYSEGNGNSEMMKIEIERLREENKVYSEMVREKDEEKREAIRQMSVAIQMLKEENSELKKRVTNTVVARRNKEGGDSQRKQQMWKPFEFKKIKLEGLWGKGFGNWALPNTDSTSKELMTL</sequence>
<name>NET3A_ARATH</name>
<protein>
    <recommendedName>
        <fullName evidence="5">Protein NETWORKED 3A</fullName>
    </recommendedName>
</protein>
<reference key="1">
    <citation type="journal article" date="2000" name="Nature">
        <title>Sequence and analysis of chromosome 1 of the plant Arabidopsis thaliana.</title>
        <authorList>
            <person name="Theologis A."/>
            <person name="Ecker J.R."/>
            <person name="Palm C.J."/>
            <person name="Federspiel N.A."/>
            <person name="Kaul S."/>
            <person name="White O."/>
            <person name="Alonso J."/>
            <person name="Altafi H."/>
            <person name="Araujo R."/>
            <person name="Bowman C.L."/>
            <person name="Brooks S.Y."/>
            <person name="Buehler E."/>
            <person name="Chan A."/>
            <person name="Chao Q."/>
            <person name="Chen H."/>
            <person name="Cheuk R.F."/>
            <person name="Chin C.W."/>
            <person name="Chung M.K."/>
            <person name="Conn L."/>
            <person name="Conway A.B."/>
            <person name="Conway A.R."/>
            <person name="Creasy T.H."/>
            <person name="Dewar K."/>
            <person name="Dunn P."/>
            <person name="Etgu P."/>
            <person name="Feldblyum T.V."/>
            <person name="Feng J.-D."/>
            <person name="Fong B."/>
            <person name="Fujii C.Y."/>
            <person name="Gill J.E."/>
            <person name="Goldsmith A.D."/>
            <person name="Haas B."/>
            <person name="Hansen N.F."/>
            <person name="Hughes B."/>
            <person name="Huizar L."/>
            <person name="Hunter J.L."/>
            <person name="Jenkins J."/>
            <person name="Johnson-Hopson C."/>
            <person name="Khan S."/>
            <person name="Khaykin E."/>
            <person name="Kim C.J."/>
            <person name="Koo H.L."/>
            <person name="Kremenetskaia I."/>
            <person name="Kurtz D.B."/>
            <person name="Kwan A."/>
            <person name="Lam B."/>
            <person name="Langin-Hooper S."/>
            <person name="Lee A."/>
            <person name="Lee J.M."/>
            <person name="Lenz C.A."/>
            <person name="Li J.H."/>
            <person name="Li Y.-P."/>
            <person name="Lin X."/>
            <person name="Liu S.X."/>
            <person name="Liu Z.A."/>
            <person name="Luros J.S."/>
            <person name="Maiti R."/>
            <person name="Marziali A."/>
            <person name="Militscher J."/>
            <person name="Miranda M."/>
            <person name="Nguyen M."/>
            <person name="Nierman W.C."/>
            <person name="Osborne B.I."/>
            <person name="Pai G."/>
            <person name="Peterson J."/>
            <person name="Pham P.K."/>
            <person name="Rizzo M."/>
            <person name="Rooney T."/>
            <person name="Rowley D."/>
            <person name="Sakano H."/>
            <person name="Salzberg S.L."/>
            <person name="Schwartz J.R."/>
            <person name="Shinn P."/>
            <person name="Southwick A.M."/>
            <person name="Sun H."/>
            <person name="Tallon L.J."/>
            <person name="Tambunga G."/>
            <person name="Toriumi M.J."/>
            <person name="Town C.D."/>
            <person name="Utterback T."/>
            <person name="Van Aken S."/>
            <person name="Vaysberg M."/>
            <person name="Vysotskaia V.S."/>
            <person name="Walker M."/>
            <person name="Wu D."/>
            <person name="Yu G."/>
            <person name="Fraser C.M."/>
            <person name="Venter J.C."/>
            <person name="Davis R.W."/>
        </authorList>
    </citation>
    <scope>NUCLEOTIDE SEQUENCE [LARGE SCALE GENOMIC DNA]</scope>
    <source>
        <strain>cv. Columbia</strain>
    </source>
</reference>
<reference key="2">
    <citation type="journal article" date="2017" name="Plant J.">
        <title>Araport11: a complete reannotation of the Arabidopsis thaliana reference genome.</title>
        <authorList>
            <person name="Cheng C.Y."/>
            <person name="Krishnakumar V."/>
            <person name="Chan A.P."/>
            <person name="Thibaud-Nissen F."/>
            <person name="Schobel S."/>
            <person name="Town C.D."/>
        </authorList>
    </citation>
    <scope>GENOME REANNOTATION</scope>
    <source>
        <strain>cv. Columbia</strain>
    </source>
</reference>
<reference key="3">
    <citation type="submission" date="2004-09" db="EMBL/GenBank/DDBJ databases">
        <title>Arabidopsis ORF clones.</title>
        <authorList>
            <person name="Kim C.J."/>
            <person name="Chen H."/>
            <person name="Cheuk R."/>
            <person name="Shinn P."/>
            <person name="Ecker J.R."/>
        </authorList>
    </citation>
    <scope>NUCLEOTIDE SEQUENCE [LARGE SCALE MRNA]</scope>
    <source>
        <strain>cv. Columbia</strain>
    </source>
</reference>
<reference key="4">
    <citation type="submission" date="2004-09" db="EMBL/GenBank/DDBJ databases">
        <title>Large-scale analysis of RIKEN Arabidopsis full-length (RAFL) cDNAs.</title>
        <authorList>
            <person name="Totoki Y."/>
            <person name="Seki M."/>
            <person name="Ishida J."/>
            <person name="Nakajima M."/>
            <person name="Enju A."/>
            <person name="Kamiya A."/>
            <person name="Narusaka M."/>
            <person name="Shin-i T."/>
            <person name="Nakagawa M."/>
            <person name="Sakamoto N."/>
            <person name="Oishi K."/>
            <person name="Kohara Y."/>
            <person name="Kobayashi M."/>
            <person name="Toyoda A."/>
            <person name="Sakaki Y."/>
            <person name="Sakurai T."/>
            <person name="Iida K."/>
            <person name="Akiyama K."/>
            <person name="Satou M."/>
            <person name="Toyoda T."/>
            <person name="Konagaya A."/>
            <person name="Carninci P."/>
            <person name="Kawai J."/>
            <person name="Hayashizaki Y."/>
            <person name="Shinozaki K."/>
        </authorList>
    </citation>
    <scope>NUCLEOTIDE SEQUENCE [LARGE SCALE MRNA] OF 241-269</scope>
    <source>
        <strain>cv. Columbia</strain>
    </source>
</reference>
<reference key="5">
    <citation type="journal article" date="2012" name="Curr. Biol.">
        <title>A superfamily of actin-binding proteins at the actin-membrane nexus of higher plants.</title>
        <authorList>
            <person name="Deeks M.J."/>
            <person name="Calcutt J.R."/>
            <person name="Ingle E.K."/>
            <person name="Hawkins T.J."/>
            <person name="Chapman S."/>
            <person name="Richardson A.C."/>
            <person name="Mentlak D.A."/>
            <person name="Dixon M.R."/>
            <person name="Cartwright F."/>
            <person name="Smertenko A.P."/>
            <person name="Oparka K."/>
            <person name="Hussey P.J."/>
        </authorList>
    </citation>
    <scope>SUBCELLULAR LOCATION</scope>
    <scope>DOMAIN</scope>
    <scope>GENE FAMILY</scope>
    <scope>NOMENCLATURE</scope>
</reference>
<reference key="6">
    <citation type="journal article" date="2014" name="Front. Plant Sci.">
        <title>The evolution of the actin binding NET superfamily.</title>
        <authorList>
            <person name="Hawkins T.J."/>
            <person name="Deeks M.J."/>
            <person name="Wang P."/>
            <person name="Hussey P.J."/>
        </authorList>
    </citation>
    <scope>GENE FAMILY</scope>
</reference>
<accession>Q66GR8</accession>
<accession>Q67ZU6</accession>
<accession>Q9LR76</accession>
<keyword id="KW-0175">Coiled coil</keyword>
<keyword id="KW-0963">Cytoplasm</keyword>
<keyword id="KW-0206">Cytoskeleton</keyword>
<keyword id="KW-0472">Membrane</keyword>
<keyword id="KW-0539">Nucleus</keyword>
<keyword id="KW-1185">Reference proteome</keyword>